<gene>
    <name evidence="9" type="primary">grx5</name>
    <name type="ORF">SPAPB2B4.02</name>
</gene>
<evidence type="ECO:0000250" key="1">
    <source>
        <dbReference type="UniProtKB" id="Q86SX6"/>
    </source>
</evidence>
<evidence type="ECO:0000255" key="2">
    <source>
        <dbReference type="PROSITE-ProRule" id="PRU00686"/>
    </source>
</evidence>
<evidence type="ECO:0000269" key="3">
    <source>
    </source>
</evidence>
<evidence type="ECO:0000269" key="4">
    <source>
    </source>
</evidence>
<evidence type="ECO:0000269" key="5">
    <source>
    </source>
</evidence>
<evidence type="ECO:0000269" key="6">
    <source>
    </source>
</evidence>
<evidence type="ECO:0000305" key="7"/>
<evidence type="ECO:0000305" key="8">
    <source>
    </source>
</evidence>
<evidence type="ECO:0000312" key="9">
    <source>
        <dbReference type="PomBase" id="SPAPB2B4.02"/>
    </source>
</evidence>
<dbReference type="EMBL" id="AY435095">
    <property type="protein sequence ID" value="AAR08198.1"/>
    <property type="molecule type" value="Genomic_DNA"/>
</dbReference>
<dbReference type="EMBL" id="CU329670">
    <property type="protein sequence ID" value="CAC21468.1"/>
    <property type="molecule type" value="Genomic_DNA"/>
</dbReference>
<dbReference type="RefSeq" id="NP_593888.1">
    <property type="nucleotide sequence ID" value="NM_001019318.2"/>
</dbReference>
<dbReference type="SMR" id="Q9HDW8"/>
<dbReference type="BioGRID" id="279903">
    <property type="interactions" value="27"/>
</dbReference>
<dbReference type="FunCoup" id="Q9HDW8">
    <property type="interactions" value="302"/>
</dbReference>
<dbReference type="STRING" id="284812.Q9HDW8"/>
<dbReference type="iPTMnet" id="Q9HDW8"/>
<dbReference type="PaxDb" id="4896-SPAPB2B4.02.1"/>
<dbReference type="EnsemblFungi" id="SPAPB2B4.02.1">
    <property type="protein sequence ID" value="SPAPB2B4.02.1:pep"/>
    <property type="gene ID" value="SPAPB2B4.02"/>
</dbReference>
<dbReference type="GeneID" id="2543483"/>
<dbReference type="KEGG" id="spo:2543483"/>
<dbReference type="PomBase" id="SPAPB2B4.02">
    <property type="gene designation" value="grx5"/>
</dbReference>
<dbReference type="VEuPathDB" id="FungiDB:SPAPB2B4.02"/>
<dbReference type="eggNOG" id="KOG0911">
    <property type="taxonomic scope" value="Eukaryota"/>
</dbReference>
<dbReference type="HOGENOM" id="CLU_026126_2_0_1"/>
<dbReference type="InParanoid" id="Q9HDW8"/>
<dbReference type="OMA" id="TKLMPQC"/>
<dbReference type="PhylomeDB" id="Q9HDW8"/>
<dbReference type="Reactome" id="R-SPO-1362409">
    <property type="pathway name" value="Mitochondrial iron-sulfur cluster biogenesis"/>
</dbReference>
<dbReference type="PRO" id="PR:Q9HDW8"/>
<dbReference type="Proteomes" id="UP000002485">
    <property type="component" value="Chromosome I"/>
</dbReference>
<dbReference type="GO" id="GO:0005759">
    <property type="term" value="C:mitochondrial matrix"/>
    <property type="evidence" value="ECO:0000318"/>
    <property type="project" value="GO_Central"/>
</dbReference>
<dbReference type="GO" id="GO:0005739">
    <property type="term" value="C:mitochondrion"/>
    <property type="evidence" value="ECO:0000314"/>
    <property type="project" value="PomBase"/>
</dbReference>
<dbReference type="GO" id="GO:0051537">
    <property type="term" value="F:2 iron, 2 sulfur cluster binding"/>
    <property type="evidence" value="ECO:0000314"/>
    <property type="project" value="PomBase"/>
</dbReference>
<dbReference type="GO" id="GO:0015038">
    <property type="term" value="F:glutathione disulfide oxidoreductase activity"/>
    <property type="evidence" value="ECO:0000315"/>
    <property type="project" value="PomBase"/>
</dbReference>
<dbReference type="GO" id="GO:0046872">
    <property type="term" value="F:metal ion binding"/>
    <property type="evidence" value="ECO:0007669"/>
    <property type="project" value="UniProtKB-KW"/>
</dbReference>
<dbReference type="GO" id="GO:0015035">
    <property type="term" value="F:protein-disulfide reductase activity"/>
    <property type="evidence" value="ECO:0000250"/>
    <property type="project" value="PomBase"/>
</dbReference>
<dbReference type="GO" id="GO:0044571">
    <property type="term" value="P:[2Fe-2S] cluster assembly"/>
    <property type="evidence" value="ECO:0000316"/>
    <property type="project" value="PomBase"/>
</dbReference>
<dbReference type="GO" id="GO:0044572">
    <property type="term" value="P:[4Fe-4S] cluster assembly"/>
    <property type="evidence" value="ECO:0000250"/>
    <property type="project" value="PomBase"/>
</dbReference>
<dbReference type="CDD" id="cd03028">
    <property type="entry name" value="GRX_PICOT_like"/>
    <property type="match status" value="1"/>
</dbReference>
<dbReference type="FunFam" id="3.40.30.10:FF:000005">
    <property type="entry name" value="Glutaredoxin 5"/>
    <property type="match status" value="1"/>
</dbReference>
<dbReference type="Gene3D" id="3.40.30.10">
    <property type="entry name" value="Glutaredoxin"/>
    <property type="match status" value="1"/>
</dbReference>
<dbReference type="InterPro" id="IPR002109">
    <property type="entry name" value="Glutaredoxin"/>
</dbReference>
<dbReference type="InterPro" id="IPR033658">
    <property type="entry name" value="GRX_PICOT-like"/>
</dbReference>
<dbReference type="InterPro" id="IPR004480">
    <property type="entry name" value="Monothiol_GRX-rel"/>
</dbReference>
<dbReference type="InterPro" id="IPR036249">
    <property type="entry name" value="Thioredoxin-like_sf"/>
</dbReference>
<dbReference type="NCBIfam" id="TIGR00365">
    <property type="entry name" value="Grx4 family monothiol glutaredoxin"/>
    <property type="match status" value="1"/>
</dbReference>
<dbReference type="PANTHER" id="PTHR10293">
    <property type="entry name" value="GLUTAREDOXIN FAMILY MEMBER"/>
    <property type="match status" value="1"/>
</dbReference>
<dbReference type="PANTHER" id="PTHR10293:SF16">
    <property type="entry name" value="GLUTAREDOXIN-RELATED PROTEIN 5, MITOCHONDRIAL"/>
    <property type="match status" value="1"/>
</dbReference>
<dbReference type="Pfam" id="PF00462">
    <property type="entry name" value="Glutaredoxin"/>
    <property type="match status" value="1"/>
</dbReference>
<dbReference type="SUPFAM" id="SSF52833">
    <property type="entry name" value="Thioredoxin-like"/>
    <property type="match status" value="1"/>
</dbReference>
<dbReference type="PROSITE" id="PS51354">
    <property type="entry name" value="GLUTAREDOXIN_2"/>
    <property type="match status" value="1"/>
</dbReference>
<accession>Q9HDW8</accession>
<proteinExistence type="evidence at protein level"/>
<comment type="function">
    <text evidence="5 6">Monothiol glutaredoxin involved in mitochondrial iron-sulfur (Fe/S) cluster transfer (PubMed:20085751, PubMed:23615440). Receives 2Fe/2S clusters from scaffold protein isu1 and mediates their transfer to apoproteins, to the 4Fe/FS cluster biosynthesis machinery, or export from mitochondrion (PubMed:20085751, PubMed:23615440).</text>
</comment>
<comment type="subunit">
    <text evidence="1 5">Homodimer (By similarity). Interacts with ISA1 and ISA2 (PubMed:20085751).</text>
</comment>
<comment type="subcellular location">
    <subcellularLocation>
        <location evidence="3 5">Mitochondrion</location>
    </subcellularLocation>
</comment>
<comment type="induction">
    <text evidence="4">By nitrosative and osmotic stresses.</text>
</comment>
<comment type="similarity">
    <text evidence="7">Belongs to the glutaredoxin family. Monothiol subfamily.</text>
</comment>
<feature type="chain" id="PRO_0000102252" description="Monothiol glutaredoxin-5, mitochondrial">
    <location>
        <begin position="1"/>
        <end position="146"/>
    </location>
</feature>
<feature type="domain" description="Glutaredoxin" evidence="2">
    <location>
        <begin position="26"/>
        <end position="131"/>
    </location>
</feature>
<feature type="binding site" evidence="1">
    <location>
        <position position="43"/>
    </location>
    <ligand>
        <name>glutathione</name>
        <dbReference type="ChEBI" id="CHEBI:57925"/>
    </ligand>
</feature>
<feature type="binding site" evidence="8">
    <location>
        <position position="51"/>
    </location>
    <ligand>
        <name>[2Fe-2S] cluster</name>
        <dbReference type="ChEBI" id="CHEBI:190135"/>
        <note>ligand shared between dimeric partners</note>
    </ligand>
</feature>
<feature type="binding site" evidence="1">
    <location>
        <begin position="83"/>
        <end position="87"/>
    </location>
    <ligand>
        <name>glutathione</name>
        <dbReference type="ChEBI" id="CHEBI:57925"/>
    </ligand>
</feature>
<feature type="binding site" evidence="1">
    <location>
        <position position="95"/>
    </location>
    <ligand>
        <name>glutathione</name>
        <dbReference type="ChEBI" id="CHEBI:57925"/>
    </ligand>
</feature>
<feature type="binding site" evidence="1">
    <location>
        <begin position="108"/>
        <end position="109"/>
    </location>
    <ligand>
        <name>glutathione</name>
        <dbReference type="ChEBI" id="CHEBI:57925"/>
    </ligand>
</feature>
<feature type="mutagenesis site" description="Abolishes iron-sulfur cluster binding." evidence="6">
    <original>C</original>
    <variation>S</variation>
    <location>
        <position position="51"/>
    </location>
</feature>
<reference key="1">
    <citation type="submission" date="2003-10" db="EMBL/GenBank/DDBJ databases">
        <title>Cloning, expression and characterization of a monothiol glutaredoxin (Grx5) from the fission yeast.</title>
        <authorList>
            <person name="Maeng J.-H."/>
            <person name="Kim H.-G."/>
            <person name="Lim C.-J."/>
        </authorList>
    </citation>
    <scope>NUCLEOTIDE SEQUENCE [GENOMIC DNA]</scope>
</reference>
<reference key="2">
    <citation type="journal article" date="2002" name="Nature">
        <title>The genome sequence of Schizosaccharomyces pombe.</title>
        <authorList>
            <person name="Wood V."/>
            <person name="Gwilliam R."/>
            <person name="Rajandream M.A."/>
            <person name="Lyne M.H."/>
            <person name="Lyne R."/>
            <person name="Stewart A."/>
            <person name="Sgouros J.G."/>
            <person name="Peat N."/>
            <person name="Hayles J."/>
            <person name="Baker S.G."/>
            <person name="Basham D."/>
            <person name="Bowman S."/>
            <person name="Brooks K."/>
            <person name="Brown D."/>
            <person name="Brown S."/>
            <person name="Chillingworth T."/>
            <person name="Churcher C.M."/>
            <person name="Collins M."/>
            <person name="Connor R."/>
            <person name="Cronin A."/>
            <person name="Davis P."/>
            <person name="Feltwell T."/>
            <person name="Fraser A."/>
            <person name="Gentles S."/>
            <person name="Goble A."/>
            <person name="Hamlin N."/>
            <person name="Harris D.E."/>
            <person name="Hidalgo J."/>
            <person name="Hodgson G."/>
            <person name="Holroyd S."/>
            <person name="Hornsby T."/>
            <person name="Howarth S."/>
            <person name="Huckle E.J."/>
            <person name="Hunt S."/>
            <person name="Jagels K."/>
            <person name="James K.D."/>
            <person name="Jones L."/>
            <person name="Jones M."/>
            <person name="Leather S."/>
            <person name="McDonald S."/>
            <person name="McLean J."/>
            <person name="Mooney P."/>
            <person name="Moule S."/>
            <person name="Mungall K.L."/>
            <person name="Murphy L.D."/>
            <person name="Niblett D."/>
            <person name="Odell C."/>
            <person name="Oliver K."/>
            <person name="O'Neil S."/>
            <person name="Pearson D."/>
            <person name="Quail M.A."/>
            <person name="Rabbinowitsch E."/>
            <person name="Rutherford K.M."/>
            <person name="Rutter S."/>
            <person name="Saunders D."/>
            <person name="Seeger K."/>
            <person name="Sharp S."/>
            <person name="Skelton J."/>
            <person name="Simmonds M.N."/>
            <person name="Squares R."/>
            <person name="Squares S."/>
            <person name="Stevens K."/>
            <person name="Taylor K."/>
            <person name="Taylor R.G."/>
            <person name="Tivey A."/>
            <person name="Walsh S.V."/>
            <person name="Warren T."/>
            <person name="Whitehead S."/>
            <person name="Woodward J.R."/>
            <person name="Volckaert G."/>
            <person name="Aert R."/>
            <person name="Robben J."/>
            <person name="Grymonprez B."/>
            <person name="Weltjens I."/>
            <person name="Vanstreels E."/>
            <person name="Rieger M."/>
            <person name="Schaefer M."/>
            <person name="Mueller-Auer S."/>
            <person name="Gabel C."/>
            <person name="Fuchs M."/>
            <person name="Duesterhoeft A."/>
            <person name="Fritzc C."/>
            <person name="Holzer E."/>
            <person name="Moestl D."/>
            <person name="Hilbert H."/>
            <person name="Borzym K."/>
            <person name="Langer I."/>
            <person name="Beck A."/>
            <person name="Lehrach H."/>
            <person name="Reinhardt R."/>
            <person name="Pohl T.M."/>
            <person name="Eger P."/>
            <person name="Zimmermann W."/>
            <person name="Wedler H."/>
            <person name="Wambutt R."/>
            <person name="Purnelle B."/>
            <person name="Goffeau A."/>
            <person name="Cadieu E."/>
            <person name="Dreano S."/>
            <person name="Gloux S."/>
            <person name="Lelaure V."/>
            <person name="Mottier S."/>
            <person name="Galibert F."/>
            <person name="Aves S.J."/>
            <person name="Xiang Z."/>
            <person name="Hunt C."/>
            <person name="Moore K."/>
            <person name="Hurst S.M."/>
            <person name="Lucas M."/>
            <person name="Rochet M."/>
            <person name="Gaillardin C."/>
            <person name="Tallada V.A."/>
            <person name="Garzon A."/>
            <person name="Thode G."/>
            <person name="Daga R.R."/>
            <person name="Cruzado L."/>
            <person name="Jimenez J."/>
            <person name="Sanchez M."/>
            <person name="del Rey F."/>
            <person name="Benito J."/>
            <person name="Dominguez A."/>
            <person name="Revuelta J.L."/>
            <person name="Moreno S."/>
            <person name="Armstrong J."/>
            <person name="Forsburg S.L."/>
            <person name="Cerutti L."/>
            <person name="Lowe T."/>
            <person name="McCombie W.R."/>
            <person name="Paulsen I."/>
            <person name="Potashkin J."/>
            <person name="Shpakovski G.V."/>
            <person name="Ussery D."/>
            <person name="Barrell B.G."/>
            <person name="Nurse P."/>
        </authorList>
    </citation>
    <scope>NUCLEOTIDE SEQUENCE [LARGE SCALE GENOMIC DNA]</scope>
    <source>
        <strain>972 / ATCC 24843</strain>
    </source>
</reference>
<reference key="3">
    <citation type="journal article" date="2005" name="Biochem. Biophys. Res. Commun.">
        <title>Localization and function of three monothiol glutaredoxins in Schizosaccharomyces pombe.</title>
        <authorList>
            <person name="Chung W.H."/>
            <person name="Kim K.D."/>
            <person name="Roe J.H."/>
        </authorList>
    </citation>
    <scope>SUBCELLULAR LOCATION</scope>
</reference>
<reference key="4">
    <citation type="journal article" date="2005" name="Mol. Cells">
        <title>The fission yeast gene encoding monothiol glutaredoxin 5 is regulated by nitrosative and osmotic stresses.</title>
        <authorList>
            <person name="Kim H.G."/>
            <person name="Park E.H."/>
            <person name="Lim C.J."/>
        </authorList>
    </citation>
    <scope>INDUCTION</scope>
</reference>
<reference key="5">
    <citation type="journal article" date="2010" name="Biochem. Biophys. Res. Commun.">
        <title>Monothiol glutaredoxin Grx5 interacts with Fe-S scaffold proteins Isa1 and Isa2 and supports Fe-S assembly and DNA integrity in mitochondria of fission yeast.</title>
        <authorList>
            <person name="Kim K.D."/>
            <person name="Chung W.H."/>
            <person name="Kim H.J."/>
            <person name="Lee K.C."/>
            <person name="Roe J.H."/>
        </authorList>
    </citation>
    <scope>FUNCTION</scope>
    <scope>SUBCELLULAR LOCATION</scope>
    <scope>INTERACTION WITH ISA1 AND ISA2</scope>
</reference>
<reference key="6">
    <citation type="journal article" date="2013" name="Mol. Biol. Cell">
        <title>The mitochondrial Hsp70 chaperone Ssq1 facilitates Fe/S cluster transfer from Isu1 to Grx5 by complex formation.</title>
        <authorList>
            <person name="Uzarska M.A."/>
            <person name="Dutkiewicz R."/>
            <person name="Freibert S.A."/>
            <person name="Lill R."/>
            <person name="Muehlenhoff U."/>
        </authorList>
    </citation>
    <scope>FUNCTION</scope>
    <scope>MUTAGENESIS OF CYS-51</scope>
</reference>
<sequence length="146" mass="16533">MNSMFRFWIPKTSISMQLRMLSTQTRQALEQAVKEDPIVLFMKGTPTRPMCGFSLKAIQILSLENVASDKLVTYNVLSNDELREGIKEFSDWPTIPQLYINGEFVGGSDILASMHKSGELHKILKEINALAPEQPKDSEEETTKKD</sequence>
<keyword id="KW-0001">2Fe-2S</keyword>
<keyword id="KW-0408">Iron</keyword>
<keyword id="KW-0411">Iron-sulfur</keyword>
<keyword id="KW-0479">Metal-binding</keyword>
<keyword id="KW-0496">Mitochondrion</keyword>
<keyword id="KW-0676">Redox-active center</keyword>
<keyword id="KW-1185">Reference proteome</keyword>
<organism>
    <name type="scientific">Schizosaccharomyces pombe (strain 972 / ATCC 24843)</name>
    <name type="common">Fission yeast</name>
    <dbReference type="NCBI Taxonomy" id="284812"/>
    <lineage>
        <taxon>Eukaryota</taxon>
        <taxon>Fungi</taxon>
        <taxon>Dikarya</taxon>
        <taxon>Ascomycota</taxon>
        <taxon>Taphrinomycotina</taxon>
        <taxon>Schizosaccharomycetes</taxon>
        <taxon>Schizosaccharomycetales</taxon>
        <taxon>Schizosaccharomycetaceae</taxon>
        <taxon>Schizosaccharomyces</taxon>
    </lineage>
</organism>
<protein>
    <recommendedName>
        <fullName>Monothiol glutaredoxin-5, mitochondrial</fullName>
    </recommendedName>
</protein>
<name>GLRX5_SCHPO</name>